<accession>P66303</accession>
<accession>Q491N2</accession>
<accession>Q9A1V2</accession>
<gene>
    <name evidence="1" type="primary">rpmJ</name>
    <name type="ordered locus">SPy_0076</name>
    <name type="ordered locus">M5005_Spy0067</name>
</gene>
<reference key="1">
    <citation type="journal article" date="2001" name="Proc. Natl. Acad. Sci. U.S.A.">
        <title>Complete genome sequence of an M1 strain of Streptococcus pyogenes.</title>
        <authorList>
            <person name="Ferretti J.J."/>
            <person name="McShan W.M."/>
            <person name="Ajdic D.J."/>
            <person name="Savic D.J."/>
            <person name="Savic G."/>
            <person name="Lyon K."/>
            <person name="Primeaux C."/>
            <person name="Sezate S."/>
            <person name="Suvorov A.N."/>
            <person name="Kenton S."/>
            <person name="Lai H.S."/>
            <person name="Lin S.P."/>
            <person name="Qian Y."/>
            <person name="Jia H.G."/>
            <person name="Najar F.Z."/>
            <person name="Ren Q."/>
            <person name="Zhu H."/>
            <person name="Song L."/>
            <person name="White J."/>
            <person name="Yuan X."/>
            <person name="Clifton S.W."/>
            <person name="Roe B.A."/>
            <person name="McLaughlin R.E."/>
        </authorList>
    </citation>
    <scope>NUCLEOTIDE SEQUENCE [LARGE SCALE GENOMIC DNA]</scope>
    <source>
        <strain>ATCC 700294 / SF370 / Serotype M1</strain>
    </source>
</reference>
<reference key="2">
    <citation type="journal article" date="2005" name="J. Infect. Dis.">
        <title>Evolutionary origin and emergence of a highly successful clone of serotype M1 group A Streptococcus involved multiple horizontal gene transfer events.</title>
        <authorList>
            <person name="Sumby P."/>
            <person name="Porcella S.F."/>
            <person name="Madrigal A.G."/>
            <person name="Barbian K.D."/>
            <person name="Virtaneva K."/>
            <person name="Ricklefs S.M."/>
            <person name="Sturdevant D.E."/>
            <person name="Graham M.R."/>
            <person name="Vuopio-Varkila J."/>
            <person name="Hoe N.P."/>
            <person name="Musser J.M."/>
        </authorList>
    </citation>
    <scope>NUCLEOTIDE SEQUENCE [LARGE SCALE GENOMIC DNA]</scope>
    <source>
        <strain>ATCC BAA-947 / MGAS5005 / Serotype M1</strain>
    </source>
</reference>
<keyword id="KW-1185">Reference proteome</keyword>
<keyword id="KW-0687">Ribonucleoprotein</keyword>
<keyword id="KW-0689">Ribosomal protein</keyword>
<organism>
    <name type="scientific">Streptococcus pyogenes serotype M1</name>
    <dbReference type="NCBI Taxonomy" id="301447"/>
    <lineage>
        <taxon>Bacteria</taxon>
        <taxon>Bacillati</taxon>
        <taxon>Bacillota</taxon>
        <taxon>Bacilli</taxon>
        <taxon>Lactobacillales</taxon>
        <taxon>Streptococcaceae</taxon>
        <taxon>Streptococcus</taxon>
    </lineage>
</organism>
<proteinExistence type="inferred from homology"/>
<comment type="similarity">
    <text evidence="1">Belongs to the bacterial ribosomal protein bL36 family.</text>
</comment>
<evidence type="ECO:0000255" key="1">
    <source>
        <dbReference type="HAMAP-Rule" id="MF_00251"/>
    </source>
</evidence>
<evidence type="ECO:0000305" key="2"/>
<protein>
    <recommendedName>
        <fullName evidence="1">Large ribosomal subunit protein bL36</fullName>
    </recommendedName>
    <alternativeName>
        <fullName evidence="2">50S ribosomal protein L36</fullName>
    </alternativeName>
</protein>
<feature type="chain" id="PRO_0000126270" description="Large ribosomal subunit protein bL36">
    <location>
        <begin position="1"/>
        <end position="38"/>
    </location>
</feature>
<dbReference type="EMBL" id="AE004092">
    <property type="protein sequence ID" value="AAK33205.1"/>
    <property type="molecule type" value="Genomic_DNA"/>
</dbReference>
<dbReference type="EMBL" id="CP000017">
    <property type="protein sequence ID" value="AAZ50686.1"/>
    <property type="molecule type" value="Genomic_DNA"/>
</dbReference>
<dbReference type="RefSeq" id="NP_268483.1">
    <property type="nucleotide sequence ID" value="NC_002737.2"/>
</dbReference>
<dbReference type="SMR" id="P66303"/>
<dbReference type="PaxDb" id="1314-HKU360_00100"/>
<dbReference type="KEGG" id="spy:SPy_0076"/>
<dbReference type="KEGG" id="spz:M5005_Spy0067"/>
<dbReference type="PATRIC" id="fig|160490.10.peg.67"/>
<dbReference type="HOGENOM" id="CLU_135723_6_2_9"/>
<dbReference type="PRO" id="PR:P66303"/>
<dbReference type="Proteomes" id="UP000000750">
    <property type="component" value="Chromosome"/>
</dbReference>
<dbReference type="GO" id="GO:0005737">
    <property type="term" value="C:cytoplasm"/>
    <property type="evidence" value="ECO:0007669"/>
    <property type="project" value="UniProtKB-ARBA"/>
</dbReference>
<dbReference type="GO" id="GO:1990904">
    <property type="term" value="C:ribonucleoprotein complex"/>
    <property type="evidence" value="ECO:0007669"/>
    <property type="project" value="UniProtKB-KW"/>
</dbReference>
<dbReference type="GO" id="GO:0005840">
    <property type="term" value="C:ribosome"/>
    <property type="evidence" value="ECO:0007669"/>
    <property type="project" value="UniProtKB-KW"/>
</dbReference>
<dbReference type="GO" id="GO:0003735">
    <property type="term" value="F:structural constituent of ribosome"/>
    <property type="evidence" value="ECO:0007669"/>
    <property type="project" value="InterPro"/>
</dbReference>
<dbReference type="GO" id="GO:0006412">
    <property type="term" value="P:translation"/>
    <property type="evidence" value="ECO:0007669"/>
    <property type="project" value="UniProtKB-UniRule"/>
</dbReference>
<dbReference type="HAMAP" id="MF_00251">
    <property type="entry name" value="Ribosomal_bL36"/>
    <property type="match status" value="1"/>
</dbReference>
<dbReference type="InterPro" id="IPR000473">
    <property type="entry name" value="Ribosomal_bL36"/>
</dbReference>
<dbReference type="InterPro" id="IPR035977">
    <property type="entry name" value="Ribosomal_bL36_sp"/>
</dbReference>
<dbReference type="NCBIfam" id="TIGR01022">
    <property type="entry name" value="rpmJ_bact"/>
    <property type="match status" value="1"/>
</dbReference>
<dbReference type="PANTHER" id="PTHR42888">
    <property type="entry name" value="50S RIBOSOMAL PROTEIN L36, CHLOROPLASTIC"/>
    <property type="match status" value="1"/>
</dbReference>
<dbReference type="PANTHER" id="PTHR42888:SF1">
    <property type="entry name" value="LARGE RIBOSOMAL SUBUNIT PROTEIN BL36C"/>
    <property type="match status" value="1"/>
</dbReference>
<dbReference type="Pfam" id="PF00444">
    <property type="entry name" value="Ribosomal_L36"/>
    <property type="match status" value="1"/>
</dbReference>
<dbReference type="SUPFAM" id="SSF57840">
    <property type="entry name" value="Ribosomal protein L36"/>
    <property type="match status" value="1"/>
</dbReference>
<dbReference type="PROSITE" id="PS00828">
    <property type="entry name" value="RIBOSOMAL_L36"/>
    <property type="match status" value="1"/>
</dbReference>
<sequence>MKVRPSVKPICEYCKVIRRNGRVMVICPTNPKHKQRQG</sequence>
<name>RL36_STRP1</name>